<gene>
    <name evidence="2" type="ordered locus">Ndas_1341</name>
</gene>
<keyword id="KW-0963">Cytoplasm</keyword>
<keyword id="KW-0520">NAD</keyword>
<keyword id="KW-0560">Oxidoreductase</keyword>
<keyword id="KW-1185">Reference proteome</keyword>
<evidence type="ECO:0000255" key="1">
    <source>
        <dbReference type="HAMAP-Rule" id="MF_02129"/>
    </source>
</evidence>
<evidence type="ECO:0000312" key="2">
    <source>
        <dbReference type="EMBL" id="ADH66773.1"/>
    </source>
</evidence>
<protein>
    <recommendedName>
        <fullName evidence="1">L-carnitine dehydrogenase</fullName>
        <shortName evidence="1">CDH</shortName>
        <shortName evidence="1">L-CDH</shortName>
        <ecNumber evidence="1">1.1.1.108</ecNumber>
    </recommendedName>
</protein>
<accession>D7B2S5</accession>
<dbReference type="EC" id="1.1.1.108" evidence="1"/>
<dbReference type="EMBL" id="CP002040">
    <property type="protein sequence ID" value="ADH66773.1"/>
    <property type="molecule type" value="Genomic_DNA"/>
</dbReference>
<dbReference type="RefSeq" id="WP_013152380.1">
    <property type="nucleotide sequence ID" value="NC_014210.1"/>
</dbReference>
<dbReference type="SMR" id="D7B2S5"/>
<dbReference type="STRING" id="446468.Ndas_1341"/>
<dbReference type="KEGG" id="nda:Ndas_1341"/>
<dbReference type="eggNOG" id="COG1250">
    <property type="taxonomic scope" value="Bacteria"/>
</dbReference>
<dbReference type="HOGENOM" id="CLU_009834_0_1_11"/>
<dbReference type="OrthoDB" id="9771883at2"/>
<dbReference type="UniPathway" id="UPA00117"/>
<dbReference type="Proteomes" id="UP000002219">
    <property type="component" value="Chromosome 1"/>
</dbReference>
<dbReference type="GO" id="GO:0005737">
    <property type="term" value="C:cytoplasm"/>
    <property type="evidence" value="ECO:0007669"/>
    <property type="project" value="UniProtKB-SubCell"/>
</dbReference>
<dbReference type="GO" id="GO:0047728">
    <property type="term" value="F:carnitine 3-dehydrogenase activity"/>
    <property type="evidence" value="ECO:0007669"/>
    <property type="project" value="UniProtKB-UniRule"/>
</dbReference>
<dbReference type="GO" id="GO:0070403">
    <property type="term" value="F:NAD+ binding"/>
    <property type="evidence" value="ECO:0007669"/>
    <property type="project" value="InterPro"/>
</dbReference>
<dbReference type="GO" id="GO:0009437">
    <property type="term" value="P:carnitine metabolic process"/>
    <property type="evidence" value="ECO:0007669"/>
    <property type="project" value="UniProtKB-UniRule"/>
</dbReference>
<dbReference type="GO" id="GO:0009056">
    <property type="term" value="P:catabolic process"/>
    <property type="evidence" value="ECO:0007669"/>
    <property type="project" value="UniProtKB-ARBA"/>
</dbReference>
<dbReference type="GO" id="GO:0006631">
    <property type="term" value="P:fatty acid metabolic process"/>
    <property type="evidence" value="ECO:0007669"/>
    <property type="project" value="InterPro"/>
</dbReference>
<dbReference type="Gene3D" id="1.10.1040.10">
    <property type="entry name" value="N-(1-d-carboxylethyl)-l-norvaline Dehydrogenase, domain 2"/>
    <property type="match status" value="1"/>
</dbReference>
<dbReference type="Gene3D" id="3.40.50.720">
    <property type="entry name" value="NAD(P)-binding Rossmann-like Domain"/>
    <property type="match status" value="1"/>
</dbReference>
<dbReference type="HAMAP" id="MF_02129">
    <property type="entry name" value="L_carnitine_dehydrog"/>
    <property type="match status" value="1"/>
</dbReference>
<dbReference type="InterPro" id="IPR006176">
    <property type="entry name" value="3-OHacyl-CoA_DH_NAD-bd"/>
</dbReference>
<dbReference type="InterPro" id="IPR006108">
    <property type="entry name" value="3HC_DH_C"/>
</dbReference>
<dbReference type="InterPro" id="IPR008927">
    <property type="entry name" value="6-PGluconate_DH-like_C_sf"/>
</dbReference>
<dbReference type="InterPro" id="IPR013328">
    <property type="entry name" value="6PGD_dom2"/>
</dbReference>
<dbReference type="InterPro" id="IPR026578">
    <property type="entry name" value="L-carnitine_dehydrogenase"/>
</dbReference>
<dbReference type="InterPro" id="IPR036291">
    <property type="entry name" value="NAD(P)-bd_dom_sf"/>
</dbReference>
<dbReference type="PANTHER" id="PTHR48075">
    <property type="entry name" value="3-HYDROXYACYL-COA DEHYDROGENASE FAMILY PROTEIN"/>
    <property type="match status" value="1"/>
</dbReference>
<dbReference type="PANTHER" id="PTHR48075:SF5">
    <property type="entry name" value="3-HYDROXYBUTYRYL-COA DEHYDROGENASE"/>
    <property type="match status" value="1"/>
</dbReference>
<dbReference type="Pfam" id="PF00725">
    <property type="entry name" value="3HCDH"/>
    <property type="match status" value="1"/>
</dbReference>
<dbReference type="Pfam" id="PF02737">
    <property type="entry name" value="3HCDH_N"/>
    <property type="match status" value="1"/>
</dbReference>
<dbReference type="SUPFAM" id="SSF48179">
    <property type="entry name" value="6-phosphogluconate dehydrogenase C-terminal domain-like"/>
    <property type="match status" value="1"/>
</dbReference>
<dbReference type="SUPFAM" id="SSF51735">
    <property type="entry name" value="NAD(P)-binding Rossmann-fold domains"/>
    <property type="match status" value="1"/>
</dbReference>
<proteinExistence type="inferred from homology"/>
<feature type="chain" id="PRO_0000417899" description="L-carnitine dehydrogenase">
    <location>
        <begin position="1"/>
        <end position="329"/>
    </location>
</feature>
<feature type="binding site" evidence="1">
    <location>
        <begin position="19"/>
        <end position="24"/>
    </location>
    <ligand>
        <name>NAD(+)</name>
        <dbReference type="ChEBI" id="CHEBI:57540"/>
    </ligand>
</feature>
<sequence length="329" mass="35126">MTENARTTPEAVRTVACVGAGVIGGGWVAHFLGRGYRVVAWDPAPDAESRLRGLVSSAWPALEELGPAEGASMANLRVVDTLAEAVADADFVQESAPERLDLKIDLLAEIDAATPEGVVIASSTSGYSMSEMQVGARTPGRLVVGHPFNPPYLVPLVEVVGGERSERWAVDWASDFYRAAGKSVITMERELPGFIGNRIQEAAWREALHMVAEGEATVEQIDLAMTSGPGLRWAFFGPCLTFHLAGGEGGMAHMLDHFGPSLKSPWTRLEAPELTAGLRDRMVAGTDEVVAGRSTAELIAQRDRRLIAVARALEEVERAEAAERAGADA</sequence>
<organism>
    <name type="scientific">Nocardiopsis dassonvillei (strain ATCC 23218 / DSM 43111 / CIP 107115 / JCM 7437 / KCTC 9190 / NBRC 14626 / NCTC 10488 / NRRL B-5397 / IMRU 509)</name>
    <name type="common">Actinomadura dassonvillei</name>
    <dbReference type="NCBI Taxonomy" id="446468"/>
    <lineage>
        <taxon>Bacteria</taxon>
        <taxon>Bacillati</taxon>
        <taxon>Actinomycetota</taxon>
        <taxon>Actinomycetes</taxon>
        <taxon>Streptosporangiales</taxon>
        <taxon>Nocardiopsidaceae</taxon>
        <taxon>Nocardiopsis</taxon>
    </lineage>
</organism>
<reference key="1">
    <citation type="journal article" date="2010" name="Stand. Genomic Sci.">
        <title>Complete genome sequence of Nocardiopsis dassonvillei type strain (IMRU 509).</title>
        <authorList>
            <consortium name="US DOE Joint Genome Institute (JGI-PGF)"/>
            <person name="Sun H."/>
            <person name="Lapidus A."/>
            <person name="Nolan M."/>
            <person name="Lucas S."/>
            <person name="Del Rio T.G."/>
            <person name="Tice H."/>
            <person name="Cheng J.F."/>
            <person name="Tapia R."/>
            <person name="Han C."/>
            <person name="Goodwin L."/>
            <person name="Pitluck S."/>
            <person name="Pagani I."/>
            <person name="Ivanova N."/>
            <person name="Mavromatis K."/>
            <person name="Mikhailova N."/>
            <person name="Pati A."/>
            <person name="Chen A."/>
            <person name="Palaniappan K."/>
            <person name="Land M."/>
            <person name="Hauser L."/>
            <person name="Chang Y.J."/>
            <person name="Jeffries C.D."/>
            <person name="Djao O.D."/>
            <person name="Rohde M."/>
            <person name="Sikorski J."/>
            <person name="Goker M."/>
            <person name="Woyke T."/>
            <person name="Bristow J."/>
            <person name="Eisen J.A."/>
            <person name="Markowitz V."/>
            <person name="Hugenholtz P."/>
            <person name="Kyrpides N.C."/>
            <person name="Klenk H.P."/>
        </authorList>
    </citation>
    <scope>NUCLEOTIDE SEQUENCE [LARGE SCALE GENOMIC DNA]</scope>
    <source>
        <strain>ATCC 23218 / DSM 43111 / CIP 107115 / JCM 7437 / KCTC 9190 / NBRC 14626 / NCTC 10488 / NRRL B-5397 / IMRU 509</strain>
    </source>
</reference>
<comment type="function">
    <text evidence="1">Catalyzes the NAD(+)-dependent oxidation of L-carnitine to 3-dehydrocarnitine.</text>
</comment>
<comment type="catalytic activity">
    <reaction evidence="1">
        <text>carnitine + NAD(+) = 3-dehydrocarnitine + NADH + H(+)</text>
        <dbReference type="Rhea" id="RHEA:19265"/>
        <dbReference type="ChEBI" id="CHEBI:15378"/>
        <dbReference type="ChEBI" id="CHEBI:17126"/>
        <dbReference type="ChEBI" id="CHEBI:57540"/>
        <dbReference type="ChEBI" id="CHEBI:57885"/>
        <dbReference type="ChEBI" id="CHEBI:57945"/>
        <dbReference type="EC" id="1.1.1.108"/>
    </reaction>
</comment>
<comment type="pathway">
    <text evidence="1">Amine and polyamine metabolism; carnitine metabolism.</text>
</comment>
<comment type="subunit">
    <text evidence="1">Homodimer.</text>
</comment>
<comment type="subcellular location">
    <subcellularLocation>
        <location evidence="1">Cytoplasm</location>
    </subcellularLocation>
</comment>
<comment type="similarity">
    <text evidence="1">Belongs to the 3-hydroxyacyl-CoA dehydrogenase family. L-carnitine dehydrogenase subfamily.</text>
</comment>
<name>LCDH_NOCDD</name>